<proteinExistence type="evidence at protein level"/>
<protein>
    <recommendedName>
        <fullName>Outer membrane virulence protein YopE</fullName>
    </recommendedName>
</protein>
<dbReference type="EMBL" id="Y00543">
    <property type="protein sequence ID" value="CAA68609.1"/>
    <property type="molecule type" value="Genomic_DNA"/>
</dbReference>
<dbReference type="EMBL" id="BX936399">
    <property type="protein sequence ID" value="CAF25368.1"/>
    <property type="molecule type" value="Genomic_DNA"/>
</dbReference>
<dbReference type="PIR" id="S03766">
    <property type="entry name" value="S03766"/>
</dbReference>
<dbReference type="RefSeq" id="WP_002229754.1">
    <property type="nucleotide sequence ID" value="NZ_CP009711.1"/>
</dbReference>
<dbReference type="PDB" id="1L2W">
    <property type="method" value="X-ray"/>
    <property type="resolution" value="2.00 A"/>
    <property type="chains" value="I/J/K/L=17-85"/>
</dbReference>
<dbReference type="PDBsum" id="1L2W"/>
<dbReference type="BMRB" id="P08008"/>
<dbReference type="SMR" id="P08008"/>
<dbReference type="KEGG" id="ypo:BZ17_4209"/>
<dbReference type="KEGG" id="yps:pYV0025"/>
<dbReference type="PATRIC" id="fig|273123.14.peg.4442"/>
<dbReference type="EvolutionaryTrace" id="P08008"/>
<dbReference type="Proteomes" id="UP000001011">
    <property type="component" value="Plasmid pYV"/>
</dbReference>
<dbReference type="GO" id="GO:0009279">
    <property type="term" value="C:cell outer membrane"/>
    <property type="evidence" value="ECO:0007669"/>
    <property type="project" value="UniProtKB-SubCell"/>
</dbReference>
<dbReference type="GO" id="GO:0005096">
    <property type="term" value="F:GTPase activator activity"/>
    <property type="evidence" value="ECO:0007669"/>
    <property type="project" value="InterPro"/>
</dbReference>
<dbReference type="GO" id="GO:0050765">
    <property type="term" value="P:negative regulation of phagocytosis"/>
    <property type="evidence" value="ECO:0007669"/>
    <property type="project" value="InterPro"/>
</dbReference>
<dbReference type="CDD" id="cd00219">
    <property type="entry name" value="ToxGAP"/>
    <property type="match status" value="1"/>
</dbReference>
<dbReference type="DisProt" id="DP01144"/>
<dbReference type="FunFam" id="1.20.120.260:FF:000001">
    <property type="entry name" value="Outer membrane virulence protein YopE"/>
    <property type="match status" value="1"/>
</dbReference>
<dbReference type="Gene3D" id="1.20.120.260">
    <property type="entry name" value="Virulence factor YopE uncharacterised domain"/>
    <property type="match status" value="1"/>
</dbReference>
<dbReference type="InterPro" id="IPR003537">
    <property type="entry name" value="YopE-like"/>
</dbReference>
<dbReference type="InterPro" id="IPR014773">
    <property type="entry name" value="YopE_GAP_dom"/>
</dbReference>
<dbReference type="InterPro" id="IPR037168">
    <property type="entry name" value="YopE_GAP_dom_sf"/>
</dbReference>
<dbReference type="InterPro" id="IPR015110">
    <property type="entry name" value="YopE_N_dom"/>
</dbReference>
<dbReference type="Pfam" id="PF03545">
    <property type="entry name" value="YopE"/>
    <property type="match status" value="1"/>
</dbReference>
<dbReference type="Pfam" id="PF09020">
    <property type="entry name" value="YopE_N"/>
    <property type="match status" value="1"/>
</dbReference>
<dbReference type="PRINTS" id="PR01372">
    <property type="entry name" value="YERSINIAYOPE"/>
</dbReference>
<dbReference type="SUPFAM" id="SSF47233">
    <property type="entry name" value="Bacterial GAP domain"/>
    <property type="match status" value="1"/>
</dbReference>
<dbReference type="SUPFAM" id="SSF69635">
    <property type="entry name" value="Type III secretory system chaperone-like"/>
    <property type="match status" value="1"/>
</dbReference>
<dbReference type="PROSITE" id="PS52059">
    <property type="entry name" value="BACT_RHOGAP"/>
    <property type="match status" value="1"/>
</dbReference>
<accession>P08008</accession>
<accession>Q663N9</accession>
<sequence length="219" mass="22987">MKISSFISTSLPLPTSVSGSSSVGEMSGRSVSQQTSDQYANNLAGRTESPQGSSLASRIIERLSSVAHSVIGFIQRMFSEGSHKPVVTPAPTPAQMPSPTSFSDSIKQLAAETLPKYMQQLNSLDAEMLQKNHDQFATGSGPLRGSITQCQGLMQFCGGELQAEASAILNTPVCGIPFSQWGTIGGAASAYVASGVDLTQAANEIKGLAQQMQKLLSLM</sequence>
<comment type="function">
    <text>Essential virulence determinant; cytotoxic effector, involved in resistance to phagocytosis.</text>
</comment>
<comment type="subcellular location">
    <subcellularLocation>
        <location>Cell outer membrane</location>
    </subcellularLocation>
</comment>
<comment type="induction">
    <text>At 37 degrees Celsius in the absence of calcium.</text>
</comment>
<comment type="miscellaneous">
    <text>N-terminal is important for export, C-terminal is indispensable for virulence.</text>
</comment>
<comment type="similarity">
    <text evidence="3">Belongs to the YopE family.</text>
</comment>
<geneLocation type="plasmid">
    <name>pIB1</name>
</geneLocation>
<geneLocation type="plasmid">
    <name>pYV</name>
</geneLocation>
<keyword id="KW-0002">3D-structure</keyword>
<keyword id="KW-0998">Cell outer membrane</keyword>
<keyword id="KW-0343">GTPase activation</keyword>
<keyword id="KW-0472">Membrane</keyword>
<keyword id="KW-0614">Plasmid</keyword>
<keyword id="KW-0843">Virulence</keyword>
<gene>
    <name type="primary">yopE</name>
    <name type="synonym">yop25</name>
    <name type="ordered locus">pYV0025</name>
</gene>
<evidence type="ECO:0000255" key="1">
    <source>
        <dbReference type="PROSITE-ProRule" id="PRU01404"/>
    </source>
</evidence>
<evidence type="ECO:0000256" key="2">
    <source>
        <dbReference type="SAM" id="MobiDB-lite"/>
    </source>
</evidence>
<evidence type="ECO:0000305" key="3"/>
<evidence type="ECO:0007829" key="4">
    <source>
        <dbReference type="PDB" id="1L2W"/>
    </source>
</evidence>
<reference key="1">
    <citation type="journal article" date="1988" name="Mol. Microbiol.">
        <title>The virulence protein Yop5 of Yersinia pseudotuberculosis is regulated at transcriptional level by plasmid-plB1-encoded trans-acting elements controlled by temperature and calcium.</title>
        <authorList>
            <person name="Forsberg A."/>
            <person name="Wolf-Watz H."/>
        </authorList>
    </citation>
    <scope>NUCLEOTIDE SEQUENCE [GENOMIC DNA]</scope>
    <source>
        <strain>YPIII / Serotype O:3</strain>
        <plasmid>pIB1</plasmid>
    </source>
</reference>
<reference key="2">
    <citation type="journal article" date="2004" name="Proc. Natl. Acad. Sci. U.S.A.">
        <title>Insights into the evolution of Yersinia pestis through whole-genome comparison with Yersinia pseudotuberculosis.</title>
        <authorList>
            <person name="Chain P.S.G."/>
            <person name="Carniel E."/>
            <person name="Larimer F.W."/>
            <person name="Lamerdin J."/>
            <person name="Stoutland P.O."/>
            <person name="Regala W.M."/>
            <person name="Georgescu A.M."/>
            <person name="Vergez L.M."/>
            <person name="Land M.L."/>
            <person name="Motin V.L."/>
            <person name="Brubaker R.R."/>
            <person name="Fowler J."/>
            <person name="Hinnebusch J."/>
            <person name="Marceau M."/>
            <person name="Medigue C."/>
            <person name="Simonet M."/>
            <person name="Chenal-Francisque V."/>
            <person name="Souza B."/>
            <person name="Dacheux D."/>
            <person name="Elliott J.M."/>
            <person name="Derbise A."/>
            <person name="Hauser L.J."/>
            <person name="Garcia E."/>
        </authorList>
    </citation>
    <scope>NUCLEOTIDE SEQUENCE [LARGE SCALE GENOMIC DNA]</scope>
    <source>
        <strain>IP32953</strain>
        <plasmid>pYV</plasmid>
    </source>
</reference>
<organism>
    <name type="scientific">Yersinia pseudotuberculosis serotype I (strain IP32953)</name>
    <dbReference type="NCBI Taxonomy" id="273123"/>
    <lineage>
        <taxon>Bacteria</taxon>
        <taxon>Pseudomonadati</taxon>
        <taxon>Pseudomonadota</taxon>
        <taxon>Gammaproteobacteria</taxon>
        <taxon>Enterobacterales</taxon>
        <taxon>Yersiniaceae</taxon>
        <taxon>Yersinia</taxon>
    </lineage>
</organism>
<feature type="chain" id="PRO_0000066367" description="Outer membrane virulence protein YopE">
    <location>
        <begin position="1"/>
        <end position="219"/>
    </location>
</feature>
<feature type="domain" description="Bacterial Rho-GAP" evidence="1">
    <location>
        <begin position="101"/>
        <end position="219"/>
    </location>
</feature>
<feature type="region of interest" description="Disordered" evidence="2">
    <location>
        <begin position="1"/>
        <end position="37"/>
    </location>
</feature>
<feature type="compositionally biased region" description="Low complexity" evidence="2">
    <location>
        <begin position="8"/>
        <end position="32"/>
    </location>
</feature>
<feature type="site" description="Arginine finger; crucial for GTP hydrolysis by stabilizing the transition state" evidence="1">
    <location>
        <position position="144"/>
    </location>
</feature>
<feature type="sequence conflict" description="In Ref. 1; CAA68609." evidence="3" ref="1">
    <original>D</original>
    <variation>A</variation>
    <location>
        <position position="134"/>
    </location>
</feature>
<feature type="sequence conflict" description="In Ref. 1; CAA68609." evidence="3" ref="1">
    <original>A</original>
    <variation>V</variation>
    <location>
        <position position="187"/>
    </location>
</feature>
<feature type="strand" evidence="4">
    <location>
        <begin position="29"/>
        <end position="34"/>
    </location>
</feature>
<feature type="helix" evidence="4">
    <location>
        <begin position="38"/>
        <end position="44"/>
    </location>
</feature>
<feature type="strand" evidence="4">
    <location>
        <begin position="60"/>
        <end position="62"/>
    </location>
</feature>
<feature type="helix" evidence="4">
    <location>
        <begin position="68"/>
        <end position="77"/>
    </location>
</feature>
<name>YOPE_YERPS</name>